<organism>
    <name type="scientific">Prochlorococcus marinus (strain NATL2A)</name>
    <dbReference type="NCBI Taxonomy" id="59920"/>
    <lineage>
        <taxon>Bacteria</taxon>
        <taxon>Bacillati</taxon>
        <taxon>Cyanobacteriota</taxon>
        <taxon>Cyanophyceae</taxon>
        <taxon>Synechococcales</taxon>
        <taxon>Prochlorococcaceae</taxon>
        <taxon>Prochlorococcus</taxon>
    </lineage>
</organism>
<evidence type="ECO:0000255" key="1">
    <source>
        <dbReference type="HAMAP-Rule" id="MF_00011"/>
    </source>
</evidence>
<feature type="chain" id="PRO_0000224303" description="Adenylosuccinate synthetase">
    <location>
        <begin position="1"/>
        <end position="437"/>
    </location>
</feature>
<feature type="active site" description="Proton acceptor" evidence="1">
    <location>
        <position position="13"/>
    </location>
</feature>
<feature type="active site" description="Proton donor" evidence="1">
    <location>
        <position position="41"/>
    </location>
</feature>
<feature type="binding site" evidence="1">
    <location>
        <begin position="12"/>
        <end position="18"/>
    </location>
    <ligand>
        <name>GTP</name>
        <dbReference type="ChEBI" id="CHEBI:37565"/>
    </ligand>
</feature>
<feature type="binding site" description="in other chain" evidence="1">
    <location>
        <begin position="13"/>
        <end position="16"/>
    </location>
    <ligand>
        <name>IMP</name>
        <dbReference type="ChEBI" id="CHEBI:58053"/>
        <note>ligand shared between dimeric partners</note>
    </ligand>
</feature>
<feature type="binding site" evidence="1">
    <location>
        <position position="13"/>
    </location>
    <ligand>
        <name>Mg(2+)</name>
        <dbReference type="ChEBI" id="CHEBI:18420"/>
    </ligand>
</feature>
<feature type="binding site" description="in other chain" evidence="1">
    <location>
        <begin position="38"/>
        <end position="41"/>
    </location>
    <ligand>
        <name>IMP</name>
        <dbReference type="ChEBI" id="CHEBI:58053"/>
        <note>ligand shared between dimeric partners</note>
    </ligand>
</feature>
<feature type="binding site" evidence="1">
    <location>
        <begin position="40"/>
        <end position="42"/>
    </location>
    <ligand>
        <name>GTP</name>
        <dbReference type="ChEBI" id="CHEBI:37565"/>
    </ligand>
</feature>
<feature type="binding site" evidence="1">
    <location>
        <position position="40"/>
    </location>
    <ligand>
        <name>Mg(2+)</name>
        <dbReference type="ChEBI" id="CHEBI:18420"/>
    </ligand>
</feature>
<feature type="binding site" description="in other chain" evidence="1">
    <location>
        <position position="128"/>
    </location>
    <ligand>
        <name>IMP</name>
        <dbReference type="ChEBI" id="CHEBI:58053"/>
        <note>ligand shared between dimeric partners</note>
    </ligand>
</feature>
<feature type="binding site" evidence="1">
    <location>
        <position position="142"/>
    </location>
    <ligand>
        <name>IMP</name>
        <dbReference type="ChEBI" id="CHEBI:58053"/>
        <note>ligand shared between dimeric partners</note>
    </ligand>
</feature>
<feature type="binding site" description="in other chain" evidence="1">
    <location>
        <position position="223"/>
    </location>
    <ligand>
        <name>IMP</name>
        <dbReference type="ChEBI" id="CHEBI:58053"/>
        <note>ligand shared between dimeric partners</note>
    </ligand>
</feature>
<feature type="binding site" description="in other chain" evidence="1">
    <location>
        <position position="238"/>
    </location>
    <ligand>
        <name>IMP</name>
        <dbReference type="ChEBI" id="CHEBI:58053"/>
        <note>ligand shared between dimeric partners</note>
    </ligand>
</feature>
<feature type="binding site" evidence="1">
    <location>
        <begin position="298"/>
        <end position="304"/>
    </location>
    <ligand>
        <name>substrate</name>
    </ligand>
</feature>
<feature type="binding site" description="in other chain" evidence="1">
    <location>
        <position position="302"/>
    </location>
    <ligand>
        <name>IMP</name>
        <dbReference type="ChEBI" id="CHEBI:58053"/>
        <note>ligand shared between dimeric partners</note>
    </ligand>
</feature>
<feature type="binding site" evidence="1">
    <location>
        <position position="304"/>
    </location>
    <ligand>
        <name>GTP</name>
        <dbReference type="ChEBI" id="CHEBI:37565"/>
    </ligand>
</feature>
<feature type="binding site" evidence="1">
    <location>
        <begin position="330"/>
        <end position="332"/>
    </location>
    <ligand>
        <name>GTP</name>
        <dbReference type="ChEBI" id="CHEBI:37565"/>
    </ligand>
</feature>
<feature type="binding site" evidence="1">
    <location>
        <begin position="412"/>
        <end position="414"/>
    </location>
    <ligand>
        <name>GTP</name>
        <dbReference type="ChEBI" id="CHEBI:37565"/>
    </ligand>
</feature>
<proteinExistence type="inferred from homology"/>
<comment type="function">
    <text evidence="1">Plays an important role in the de novo pathway of purine nucleotide biosynthesis. Catalyzes the first committed step in the biosynthesis of AMP from IMP.</text>
</comment>
<comment type="catalytic activity">
    <reaction evidence="1">
        <text>IMP + L-aspartate + GTP = N(6)-(1,2-dicarboxyethyl)-AMP + GDP + phosphate + 2 H(+)</text>
        <dbReference type="Rhea" id="RHEA:15753"/>
        <dbReference type="ChEBI" id="CHEBI:15378"/>
        <dbReference type="ChEBI" id="CHEBI:29991"/>
        <dbReference type="ChEBI" id="CHEBI:37565"/>
        <dbReference type="ChEBI" id="CHEBI:43474"/>
        <dbReference type="ChEBI" id="CHEBI:57567"/>
        <dbReference type="ChEBI" id="CHEBI:58053"/>
        <dbReference type="ChEBI" id="CHEBI:58189"/>
        <dbReference type="EC" id="6.3.4.4"/>
    </reaction>
</comment>
<comment type="cofactor">
    <cofactor evidence="1">
        <name>Mg(2+)</name>
        <dbReference type="ChEBI" id="CHEBI:18420"/>
    </cofactor>
    <text evidence="1">Binds 1 Mg(2+) ion per subunit.</text>
</comment>
<comment type="pathway">
    <text evidence="1">Purine metabolism; AMP biosynthesis via de novo pathway; AMP from IMP: step 1/2.</text>
</comment>
<comment type="subunit">
    <text evidence="1">Homodimer.</text>
</comment>
<comment type="subcellular location">
    <subcellularLocation>
        <location evidence="1">Cytoplasm</location>
    </subcellularLocation>
</comment>
<comment type="similarity">
    <text evidence="1">Belongs to the adenylosuccinate synthetase family.</text>
</comment>
<accession>Q46GR9</accession>
<protein>
    <recommendedName>
        <fullName evidence="1">Adenylosuccinate synthetase</fullName>
        <shortName evidence="1">AMPSase</shortName>
        <shortName evidence="1">AdSS</shortName>
        <ecNumber evidence="1">6.3.4.4</ecNumber>
    </recommendedName>
    <alternativeName>
        <fullName evidence="1">IMP--aspartate ligase</fullName>
    </alternativeName>
</protein>
<dbReference type="EC" id="6.3.4.4" evidence="1"/>
<dbReference type="EMBL" id="CP000095">
    <property type="protein sequence ID" value="AAZ59327.1"/>
    <property type="molecule type" value="Genomic_DNA"/>
</dbReference>
<dbReference type="RefSeq" id="WP_011294471.1">
    <property type="nucleotide sequence ID" value="NC_007335.2"/>
</dbReference>
<dbReference type="SMR" id="Q46GR9"/>
<dbReference type="STRING" id="59920.PMN2A_1839"/>
<dbReference type="KEGG" id="pmn:PMN2A_1839"/>
<dbReference type="HOGENOM" id="CLU_029848_0_0_3"/>
<dbReference type="OrthoDB" id="9807553at2"/>
<dbReference type="PhylomeDB" id="Q46GR9"/>
<dbReference type="UniPathway" id="UPA00075">
    <property type="reaction ID" value="UER00335"/>
</dbReference>
<dbReference type="Proteomes" id="UP000002535">
    <property type="component" value="Chromosome"/>
</dbReference>
<dbReference type="GO" id="GO:0005737">
    <property type="term" value="C:cytoplasm"/>
    <property type="evidence" value="ECO:0007669"/>
    <property type="project" value="UniProtKB-SubCell"/>
</dbReference>
<dbReference type="GO" id="GO:0004019">
    <property type="term" value="F:adenylosuccinate synthase activity"/>
    <property type="evidence" value="ECO:0007669"/>
    <property type="project" value="UniProtKB-UniRule"/>
</dbReference>
<dbReference type="GO" id="GO:0005525">
    <property type="term" value="F:GTP binding"/>
    <property type="evidence" value="ECO:0007669"/>
    <property type="project" value="UniProtKB-UniRule"/>
</dbReference>
<dbReference type="GO" id="GO:0000287">
    <property type="term" value="F:magnesium ion binding"/>
    <property type="evidence" value="ECO:0007669"/>
    <property type="project" value="UniProtKB-UniRule"/>
</dbReference>
<dbReference type="GO" id="GO:0044208">
    <property type="term" value="P:'de novo' AMP biosynthetic process"/>
    <property type="evidence" value="ECO:0007669"/>
    <property type="project" value="UniProtKB-UniRule"/>
</dbReference>
<dbReference type="GO" id="GO:0046040">
    <property type="term" value="P:IMP metabolic process"/>
    <property type="evidence" value="ECO:0007669"/>
    <property type="project" value="TreeGrafter"/>
</dbReference>
<dbReference type="CDD" id="cd03108">
    <property type="entry name" value="AdSS"/>
    <property type="match status" value="1"/>
</dbReference>
<dbReference type="FunFam" id="1.10.300.10:FF:000001">
    <property type="entry name" value="Adenylosuccinate synthetase"/>
    <property type="match status" value="1"/>
</dbReference>
<dbReference type="FunFam" id="3.90.170.10:FF:000001">
    <property type="entry name" value="Adenylosuccinate synthetase"/>
    <property type="match status" value="1"/>
</dbReference>
<dbReference type="Gene3D" id="3.40.440.10">
    <property type="entry name" value="Adenylosuccinate Synthetase, subunit A, domain 1"/>
    <property type="match status" value="1"/>
</dbReference>
<dbReference type="Gene3D" id="1.10.300.10">
    <property type="entry name" value="Adenylosuccinate Synthetase, subunit A, domain 2"/>
    <property type="match status" value="1"/>
</dbReference>
<dbReference type="Gene3D" id="3.90.170.10">
    <property type="entry name" value="Adenylosuccinate Synthetase, subunit A, domain 3"/>
    <property type="match status" value="1"/>
</dbReference>
<dbReference type="HAMAP" id="MF_00011">
    <property type="entry name" value="Adenylosucc_synth"/>
    <property type="match status" value="1"/>
</dbReference>
<dbReference type="InterPro" id="IPR018220">
    <property type="entry name" value="Adenylosuccin_syn_GTP-bd"/>
</dbReference>
<dbReference type="InterPro" id="IPR033128">
    <property type="entry name" value="Adenylosuccin_syn_Lys_AS"/>
</dbReference>
<dbReference type="InterPro" id="IPR042109">
    <property type="entry name" value="Adenylosuccinate_synth_dom1"/>
</dbReference>
<dbReference type="InterPro" id="IPR042110">
    <property type="entry name" value="Adenylosuccinate_synth_dom2"/>
</dbReference>
<dbReference type="InterPro" id="IPR042111">
    <property type="entry name" value="Adenylosuccinate_synth_dom3"/>
</dbReference>
<dbReference type="InterPro" id="IPR001114">
    <property type="entry name" value="Adenylosuccinate_synthetase"/>
</dbReference>
<dbReference type="InterPro" id="IPR027417">
    <property type="entry name" value="P-loop_NTPase"/>
</dbReference>
<dbReference type="NCBIfam" id="NF002223">
    <property type="entry name" value="PRK01117.1"/>
    <property type="match status" value="1"/>
</dbReference>
<dbReference type="NCBIfam" id="TIGR00184">
    <property type="entry name" value="purA"/>
    <property type="match status" value="1"/>
</dbReference>
<dbReference type="PANTHER" id="PTHR11846">
    <property type="entry name" value="ADENYLOSUCCINATE SYNTHETASE"/>
    <property type="match status" value="1"/>
</dbReference>
<dbReference type="PANTHER" id="PTHR11846:SF0">
    <property type="entry name" value="ADENYLOSUCCINATE SYNTHETASE"/>
    <property type="match status" value="1"/>
</dbReference>
<dbReference type="Pfam" id="PF00709">
    <property type="entry name" value="Adenylsucc_synt"/>
    <property type="match status" value="1"/>
</dbReference>
<dbReference type="SMART" id="SM00788">
    <property type="entry name" value="Adenylsucc_synt"/>
    <property type="match status" value="1"/>
</dbReference>
<dbReference type="SUPFAM" id="SSF52540">
    <property type="entry name" value="P-loop containing nucleoside triphosphate hydrolases"/>
    <property type="match status" value="1"/>
</dbReference>
<dbReference type="PROSITE" id="PS01266">
    <property type="entry name" value="ADENYLOSUCCIN_SYN_1"/>
    <property type="match status" value="1"/>
</dbReference>
<dbReference type="PROSITE" id="PS00513">
    <property type="entry name" value="ADENYLOSUCCIN_SYN_2"/>
    <property type="match status" value="1"/>
</dbReference>
<reference key="1">
    <citation type="journal article" date="2007" name="PLoS Genet.">
        <title>Patterns and implications of gene gain and loss in the evolution of Prochlorococcus.</title>
        <authorList>
            <person name="Kettler G.C."/>
            <person name="Martiny A.C."/>
            <person name="Huang K."/>
            <person name="Zucker J."/>
            <person name="Coleman M.L."/>
            <person name="Rodrigue S."/>
            <person name="Chen F."/>
            <person name="Lapidus A."/>
            <person name="Ferriera S."/>
            <person name="Johnson J."/>
            <person name="Steglich C."/>
            <person name="Church G.M."/>
            <person name="Richardson P."/>
            <person name="Chisholm S.W."/>
        </authorList>
    </citation>
    <scope>NUCLEOTIDE SEQUENCE [LARGE SCALE GENOMIC DNA]</scope>
    <source>
        <strain>NATL2A</strain>
    </source>
</reference>
<sequence>MANVVVIGAQWGDEGKGKITDLLSRSADVVVRYQGGVNAGHTIVVEDKVLKLHLIPSGILYPDTICLIGSGTVVDPKVMIKEIKMLEDNDIDISGLKLASTAHVTMPYHRLLDLAMEQKRGDQKIGTTGRGIGPTYADKSQRNGIRIIDLMSREKLQERLQVPLSEKNGLLQKIYGIEPLIIDEIIEEYLDYGKQLKKHIVDCNRTIHQAARKKKNILFEGAQGTLLDLDHGTYPYVTSSNPVSGGACIGAGVGPTLIDRVIGVAKAYTTRVGEGPFPTELHGSINDQLCDRGGEFGTTTGRRRRCGWFDGVIGKYAVEVNGLDCLAITKLDVLDELEEIDICVAYELNGKRIDYFPTSVEDFEKCNPIFKKLPGWRCSTENCRRLEDLPPAAMSYLRFLAELMEVPIAIVSLGANRDQTIVIEDPIHGPKRALLNS</sequence>
<name>PURA_PROMT</name>
<keyword id="KW-0963">Cytoplasm</keyword>
<keyword id="KW-0342">GTP-binding</keyword>
<keyword id="KW-0436">Ligase</keyword>
<keyword id="KW-0460">Magnesium</keyword>
<keyword id="KW-0479">Metal-binding</keyword>
<keyword id="KW-0547">Nucleotide-binding</keyword>
<keyword id="KW-0658">Purine biosynthesis</keyword>
<keyword id="KW-1185">Reference proteome</keyword>
<gene>
    <name evidence="1" type="primary">purA</name>
    <name type="ordered locus">PMN2A_1839</name>
</gene>